<name>ORC1_DICDI</name>
<dbReference type="EMBL" id="AAFI02000049">
    <property type="protein sequence ID" value="EAL65980.1"/>
    <property type="molecule type" value="Genomic_DNA"/>
</dbReference>
<dbReference type="RefSeq" id="XP_639329.1">
    <property type="nucleotide sequence ID" value="XM_634237.1"/>
</dbReference>
<dbReference type="SMR" id="Q54RM2"/>
<dbReference type="FunCoup" id="Q54RM2">
    <property type="interactions" value="170"/>
</dbReference>
<dbReference type="STRING" id="44689.Q54RM2"/>
<dbReference type="PaxDb" id="44689-DDB0233110"/>
<dbReference type="EnsemblProtists" id="EAL65980">
    <property type="protein sequence ID" value="EAL65980"/>
    <property type="gene ID" value="DDB_G0283073"/>
</dbReference>
<dbReference type="GeneID" id="8623900"/>
<dbReference type="KEGG" id="ddi:DDB_G0283073"/>
<dbReference type="dictyBase" id="DDB_G0283073">
    <property type="gene designation" value="orcA"/>
</dbReference>
<dbReference type="VEuPathDB" id="AmoebaDB:DDB_G0283073"/>
<dbReference type="eggNOG" id="KOG1514">
    <property type="taxonomic scope" value="Eukaryota"/>
</dbReference>
<dbReference type="HOGENOM" id="CLU_433777_0_0_1"/>
<dbReference type="InParanoid" id="Q54RM2"/>
<dbReference type="OMA" id="RSEVAFK"/>
<dbReference type="PhylomeDB" id="Q54RM2"/>
<dbReference type="Reactome" id="R-DDI-68616">
    <property type="pathway name" value="Assembly of the ORC complex at the origin of replication"/>
</dbReference>
<dbReference type="Reactome" id="R-DDI-68689">
    <property type="pathway name" value="CDC6 association with the ORC:origin complex"/>
</dbReference>
<dbReference type="Reactome" id="R-DDI-68949">
    <property type="pathway name" value="Orc1 removal from chromatin"/>
</dbReference>
<dbReference type="Reactome" id="R-DDI-68962">
    <property type="pathway name" value="Activation of the pre-replicative complex"/>
</dbReference>
<dbReference type="PRO" id="PR:Q54RM2"/>
<dbReference type="Proteomes" id="UP000002195">
    <property type="component" value="Chromosome 4"/>
</dbReference>
<dbReference type="GO" id="GO:0005664">
    <property type="term" value="C:nuclear origin of replication recognition complex"/>
    <property type="evidence" value="ECO:0000318"/>
    <property type="project" value="GO_Central"/>
</dbReference>
<dbReference type="GO" id="GO:0005634">
    <property type="term" value="C:nucleus"/>
    <property type="evidence" value="ECO:0000250"/>
    <property type="project" value="dictyBase"/>
</dbReference>
<dbReference type="GO" id="GO:0005524">
    <property type="term" value="F:ATP binding"/>
    <property type="evidence" value="ECO:0007669"/>
    <property type="project" value="UniProtKB-KW"/>
</dbReference>
<dbReference type="GO" id="GO:0016887">
    <property type="term" value="F:ATP hydrolysis activity"/>
    <property type="evidence" value="ECO:0007669"/>
    <property type="project" value="InterPro"/>
</dbReference>
<dbReference type="GO" id="GO:0003688">
    <property type="term" value="F:DNA replication origin binding"/>
    <property type="evidence" value="ECO:0000318"/>
    <property type="project" value="GO_Central"/>
</dbReference>
<dbReference type="GO" id="GO:0046872">
    <property type="term" value="F:metal ion binding"/>
    <property type="evidence" value="ECO:0007669"/>
    <property type="project" value="UniProtKB-KW"/>
</dbReference>
<dbReference type="GO" id="GO:0006270">
    <property type="term" value="P:DNA replication initiation"/>
    <property type="evidence" value="ECO:0000318"/>
    <property type="project" value="GO_Central"/>
</dbReference>
<dbReference type="GO" id="GO:0033314">
    <property type="term" value="P:mitotic DNA replication checkpoint signaling"/>
    <property type="evidence" value="ECO:0000318"/>
    <property type="project" value="GO_Central"/>
</dbReference>
<dbReference type="CDD" id="cd00009">
    <property type="entry name" value="AAA"/>
    <property type="match status" value="1"/>
</dbReference>
<dbReference type="FunFam" id="1.10.8.60:FF:000062">
    <property type="entry name" value="Origin recognition complex subunit 1"/>
    <property type="match status" value="1"/>
</dbReference>
<dbReference type="FunFam" id="3.40.50.300:FF:001186">
    <property type="entry name" value="Origin recognition complex subunit 1"/>
    <property type="match status" value="1"/>
</dbReference>
<dbReference type="Gene3D" id="1.10.8.60">
    <property type="match status" value="1"/>
</dbReference>
<dbReference type="Gene3D" id="3.40.50.300">
    <property type="entry name" value="P-loop containing nucleotide triphosphate hydrolases"/>
    <property type="match status" value="1"/>
</dbReference>
<dbReference type="InterPro" id="IPR003593">
    <property type="entry name" value="AAA+_ATPase"/>
</dbReference>
<dbReference type="InterPro" id="IPR041083">
    <property type="entry name" value="AAA_lid_10"/>
</dbReference>
<dbReference type="InterPro" id="IPR003959">
    <property type="entry name" value="ATPase_AAA_core"/>
</dbReference>
<dbReference type="InterPro" id="IPR050311">
    <property type="entry name" value="ORC1/CDC6"/>
</dbReference>
<dbReference type="InterPro" id="IPR027417">
    <property type="entry name" value="P-loop_NTPase"/>
</dbReference>
<dbReference type="PANTHER" id="PTHR10763">
    <property type="entry name" value="CELL DIVISION CONTROL PROTEIN 6-RELATED"/>
    <property type="match status" value="1"/>
</dbReference>
<dbReference type="PANTHER" id="PTHR10763:SF23">
    <property type="entry name" value="ORIGIN RECOGNITION COMPLEX SUBUNIT 1"/>
    <property type="match status" value="1"/>
</dbReference>
<dbReference type="Pfam" id="PF00004">
    <property type="entry name" value="AAA"/>
    <property type="match status" value="1"/>
</dbReference>
<dbReference type="Pfam" id="PF17872">
    <property type="entry name" value="AAA_lid_10"/>
    <property type="match status" value="1"/>
</dbReference>
<dbReference type="SMART" id="SM00382">
    <property type="entry name" value="AAA"/>
    <property type="match status" value="1"/>
</dbReference>
<dbReference type="SUPFAM" id="SSF52540">
    <property type="entry name" value="P-loop containing nucleoside triphosphate hydrolases"/>
    <property type="match status" value="1"/>
</dbReference>
<gene>
    <name type="primary">orcA</name>
    <name type="synonym">orc1</name>
    <name type="ORF">DDB_G0283073</name>
</gene>
<proteinExistence type="inferred from homology"/>
<feature type="chain" id="PRO_0000329974" description="Origin recognition complex subunit 1">
    <location>
        <begin position="1"/>
        <end position="631"/>
    </location>
</feature>
<feature type="region of interest" description="Disordered" evidence="3">
    <location>
        <begin position="1"/>
        <end position="164"/>
    </location>
</feature>
<feature type="compositionally biased region" description="Low complexity" evidence="3">
    <location>
        <begin position="1"/>
        <end position="14"/>
    </location>
</feature>
<feature type="compositionally biased region" description="Low complexity" evidence="3">
    <location>
        <begin position="22"/>
        <end position="37"/>
    </location>
</feature>
<feature type="compositionally biased region" description="Basic and acidic residues" evidence="3">
    <location>
        <begin position="55"/>
        <end position="80"/>
    </location>
</feature>
<feature type="compositionally biased region" description="Acidic residues" evidence="3">
    <location>
        <begin position="91"/>
        <end position="104"/>
    </location>
</feature>
<feature type="compositionally biased region" description="Basic and acidic residues" evidence="3">
    <location>
        <begin position="105"/>
        <end position="133"/>
    </location>
</feature>
<feature type="compositionally biased region" description="Acidic residues" evidence="3">
    <location>
        <begin position="141"/>
        <end position="160"/>
    </location>
</feature>
<feature type="binding site" evidence="2">
    <location>
        <position position="230"/>
    </location>
    <ligand>
        <name>ATP</name>
        <dbReference type="ChEBI" id="CHEBI:30616"/>
    </ligand>
</feature>
<feature type="binding site" evidence="2">
    <location>
        <begin position="265"/>
        <end position="273"/>
    </location>
    <ligand>
        <name>ATP</name>
        <dbReference type="ChEBI" id="CHEBI:30616"/>
    </ligand>
</feature>
<feature type="binding site" evidence="2">
    <location>
        <position position="361"/>
    </location>
    <ligand>
        <name>Mg(2+)</name>
        <dbReference type="ChEBI" id="CHEBI:18420"/>
    </ligand>
</feature>
<feature type="binding site" evidence="2">
    <location>
        <position position="362"/>
    </location>
    <ligand>
        <name>ATP</name>
        <dbReference type="ChEBI" id="CHEBI:30616"/>
    </ligand>
</feature>
<feature type="binding site" evidence="2">
    <location>
        <position position="362"/>
    </location>
    <ligand>
        <name>Mg(2+)</name>
        <dbReference type="ChEBI" id="CHEBI:18420"/>
    </ligand>
</feature>
<feature type="binding site" evidence="2">
    <location>
        <position position="395"/>
    </location>
    <ligand>
        <name>ATP</name>
        <dbReference type="ChEBI" id="CHEBI:30616"/>
    </ligand>
</feature>
<feature type="binding site" evidence="2">
    <location>
        <position position="460"/>
    </location>
    <ligand>
        <name>ATP</name>
        <dbReference type="ChEBI" id="CHEBI:30616"/>
    </ligand>
</feature>
<reference key="1">
    <citation type="journal article" date="2005" name="Nature">
        <title>The genome of the social amoeba Dictyostelium discoideum.</title>
        <authorList>
            <person name="Eichinger L."/>
            <person name="Pachebat J.A."/>
            <person name="Gloeckner G."/>
            <person name="Rajandream M.A."/>
            <person name="Sucgang R."/>
            <person name="Berriman M."/>
            <person name="Song J."/>
            <person name="Olsen R."/>
            <person name="Szafranski K."/>
            <person name="Xu Q."/>
            <person name="Tunggal B."/>
            <person name="Kummerfeld S."/>
            <person name="Madera M."/>
            <person name="Konfortov B.A."/>
            <person name="Rivero F."/>
            <person name="Bankier A.T."/>
            <person name="Lehmann R."/>
            <person name="Hamlin N."/>
            <person name="Davies R."/>
            <person name="Gaudet P."/>
            <person name="Fey P."/>
            <person name="Pilcher K."/>
            <person name="Chen G."/>
            <person name="Saunders D."/>
            <person name="Sodergren E.J."/>
            <person name="Davis P."/>
            <person name="Kerhornou A."/>
            <person name="Nie X."/>
            <person name="Hall N."/>
            <person name="Anjard C."/>
            <person name="Hemphill L."/>
            <person name="Bason N."/>
            <person name="Farbrother P."/>
            <person name="Desany B."/>
            <person name="Just E."/>
            <person name="Morio T."/>
            <person name="Rost R."/>
            <person name="Churcher C.M."/>
            <person name="Cooper J."/>
            <person name="Haydock S."/>
            <person name="van Driessche N."/>
            <person name="Cronin A."/>
            <person name="Goodhead I."/>
            <person name="Muzny D.M."/>
            <person name="Mourier T."/>
            <person name="Pain A."/>
            <person name="Lu M."/>
            <person name="Harper D."/>
            <person name="Lindsay R."/>
            <person name="Hauser H."/>
            <person name="James K.D."/>
            <person name="Quiles M."/>
            <person name="Madan Babu M."/>
            <person name="Saito T."/>
            <person name="Buchrieser C."/>
            <person name="Wardroper A."/>
            <person name="Felder M."/>
            <person name="Thangavelu M."/>
            <person name="Johnson D."/>
            <person name="Knights A."/>
            <person name="Loulseged H."/>
            <person name="Mungall K.L."/>
            <person name="Oliver K."/>
            <person name="Price C."/>
            <person name="Quail M.A."/>
            <person name="Urushihara H."/>
            <person name="Hernandez J."/>
            <person name="Rabbinowitsch E."/>
            <person name="Steffen D."/>
            <person name="Sanders M."/>
            <person name="Ma J."/>
            <person name="Kohara Y."/>
            <person name="Sharp S."/>
            <person name="Simmonds M.N."/>
            <person name="Spiegler S."/>
            <person name="Tivey A."/>
            <person name="Sugano S."/>
            <person name="White B."/>
            <person name="Walker D."/>
            <person name="Woodward J.R."/>
            <person name="Winckler T."/>
            <person name="Tanaka Y."/>
            <person name="Shaulsky G."/>
            <person name="Schleicher M."/>
            <person name="Weinstock G.M."/>
            <person name="Rosenthal A."/>
            <person name="Cox E.C."/>
            <person name="Chisholm R.L."/>
            <person name="Gibbs R.A."/>
            <person name="Loomis W.F."/>
            <person name="Platzer M."/>
            <person name="Kay R.R."/>
            <person name="Williams J.G."/>
            <person name="Dear P.H."/>
            <person name="Noegel A.A."/>
            <person name="Barrell B.G."/>
            <person name="Kuspa A."/>
        </authorList>
    </citation>
    <scope>NUCLEOTIDE SEQUENCE [LARGE SCALE GENOMIC DNA]</scope>
    <source>
        <strain>AX4</strain>
    </source>
</reference>
<keyword id="KW-0067">ATP-binding</keyword>
<keyword id="KW-0235">DNA replication</keyword>
<keyword id="KW-0238">DNA-binding</keyword>
<keyword id="KW-0460">Magnesium</keyword>
<keyword id="KW-0479">Metal-binding</keyword>
<keyword id="KW-0547">Nucleotide-binding</keyword>
<keyword id="KW-0539">Nucleus</keyword>
<keyword id="KW-1185">Reference proteome</keyword>
<comment type="function">
    <text evidence="1">Component of the origin recognition complex (ORC) that binds origins of replication. DNA-binding is ATP-dependent, however specific DNA sequences that define origins of replication have not been identified so far. ORC is required to assemble the pre-replication complex necessary to initiate DNA replication (By similarity).</text>
</comment>
<comment type="subunit">
    <text evidence="1">ORC is composed of six subunits.</text>
</comment>
<comment type="subcellular location">
    <subcellularLocation>
        <location evidence="1">Nucleus</location>
    </subcellularLocation>
</comment>
<comment type="similarity">
    <text evidence="4">Belongs to the ORC1 family.</text>
</comment>
<accession>Q54RM2</accession>
<organism>
    <name type="scientific">Dictyostelium discoideum</name>
    <name type="common">Social amoeba</name>
    <dbReference type="NCBI Taxonomy" id="44689"/>
    <lineage>
        <taxon>Eukaryota</taxon>
        <taxon>Amoebozoa</taxon>
        <taxon>Evosea</taxon>
        <taxon>Eumycetozoa</taxon>
        <taxon>Dictyostelia</taxon>
        <taxon>Dictyosteliales</taxon>
        <taxon>Dictyosteliaceae</taxon>
        <taxon>Dictyostelium</taxon>
    </lineage>
</organism>
<protein>
    <recommendedName>
        <fullName>Origin recognition complex subunit 1</fullName>
    </recommendedName>
    <alternativeName>
        <fullName>Origin replication complex subunit A</fullName>
    </alternativeName>
</protein>
<sequence>MTDESSSSISYPPIKKYKKSLKLNNNTNNNNKNNNNHNNRDIVMQPNSTDEESSDNEKIGFSDPENEKINKHKASFKDSNDENNNNSTYYEDTDDDDYEDEDEDENHKIKDESDNSEDFNNHTKNTTDLDEGFKSTVNGSESEEEEEEEEYEEEEEEDEEGKFNLDQYDEFYEDDDDGDDDDDDDENAQDKVEILQIEHQNLDNDNDNDNDYANDNIYTKAKEALHLSAVPDKLPGREKEKATIASFIRAKLKANESGGCLYIAGMPGTGKTATVKEIIKELQAKKKQQGGGGGLNFQFIEINGMQLSDPHQLYHILYNKMQKTRKSLEPKKISSQDALRLIQRNFELKNKKKQFRVILVDEFDSLITKKQTVIYNLFEWPNKPNSKLIIIAIANTMNLPDTLLPRVKSRMGLQKVPFTPYNIEQLETIIKYRLQDLDAFDEESIQICSKRVAAVCGDARRALEICRKAATIANQEYQKKLLIFNNSNNNKSLSGSQKLPIPGPITADHIEEVFEQFSSPLLKKLNQLSFYEKLFLLCICRENQFSNVPEVKYGTISTRMRIITKKINVSCPNPTQLFQLAGNLLGCKFIIIQDDKPINWDHQIKLNLPLEDLSFGLEQDPDLKNLEISNN</sequence>
<evidence type="ECO:0000250" key="1"/>
<evidence type="ECO:0000250" key="2">
    <source>
        <dbReference type="UniProtKB" id="Q13415"/>
    </source>
</evidence>
<evidence type="ECO:0000256" key="3">
    <source>
        <dbReference type="SAM" id="MobiDB-lite"/>
    </source>
</evidence>
<evidence type="ECO:0000305" key="4"/>